<organism>
    <name type="scientific">Rhodobacter capsulatus (strain ATCC BAA-309 / NBRC 16581 / SB1003)</name>
    <dbReference type="NCBI Taxonomy" id="272942"/>
    <lineage>
        <taxon>Bacteria</taxon>
        <taxon>Pseudomonadati</taxon>
        <taxon>Pseudomonadota</taxon>
        <taxon>Alphaproteobacteria</taxon>
        <taxon>Rhodobacterales</taxon>
        <taxon>Rhodobacter group</taxon>
        <taxon>Rhodobacter</taxon>
    </lineage>
</organism>
<reference key="1">
    <citation type="journal article" date="1994" name="J. Bacteriol.">
        <title>Nucleotide sequence and characterization of the Rhodobacter capsulatus hvrB gene: HvrB is an activator of S-adenosyl-L-homocysteine hydrolase expression and is a member of the LysR family.</title>
        <authorList>
            <person name="Buggy J.J."/>
            <person name="Sganga M.W."/>
            <person name="Bauer C.E."/>
        </authorList>
    </citation>
    <scope>NUCLEOTIDE SEQUENCE [GENOMIC DNA]</scope>
    <source>
        <strain>ATCC BAA-309 / NBRC 16581 / SB1003</strain>
    </source>
</reference>
<reference key="2">
    <citation type="journal article" date="2010" name="J. Bacteriol.">
        <title>Complete genome sequence of the photosynthetic purple nonsulfur bacterium Rhodobacter capsulatus SB 1003.</title>
        <authorList>
            <person name="Strnad H."/>
            <person name="Lapidus A."/>
            <person name="Paces J."/>
            <person name="Ulbrich P."/>
            <person name="Vlcek C."/>
            <person name="Paces V."/>
            <person name="Haselkorn R."/>
        </authorList>
    </citation>
    <scope>NUCLEOTIDE SEQUENCE [LARGE SCALE GENOMIC DNA]</scope>
    <source>
        <strain>ATCC BAA-309 / NBRC 16581 / SB1003</strain>
    </source>
</reference>
<feature type="chain" id="PRO_0000105639" description="AhcY transcriptional activator HvrB">
    <location>
        <begin position="1"/>
        <end position="292"/>
    </location>
</feature>
<feature type="domain" description="HTH lysR-type" evidence="1">
    <location>
        <begin position="10"/>
        <end position="67"/>
    </location>
</feature>
<feature type="DNA-binding region" description="H-T-H motif" evidence="1">
    <location>
        <begin position="27"/>
        <end position="46"/>
    </location>
</feature>
<gene>
    <name type="primary">hvrB</name>
    <name type="ordered locus">RCAP_rcc00047</name>
</gene>
<accession>P42507</accession>
<accession>D5AKH0</accession>
<protein>
    <recommendedName>
        <fullName>AhcY transcriptional activator HvrB</fullName>
    </recommendedName>
</protein>
<dbReference type="EMBL" id="L23836">
    <property type="protein sequence ID" value="AAA53542.1"/>
    <property type="molecule type" value="Genomic_DNA"/>
</dbReference>
<dbReference type="EMBL" id="CP001312">
    <property type="protein sequence ID" value="ADE83812.1"/>
    <property type="molecule type" value="Genomic_DNA"/>
</dbReference>
<dbReference type="PIR" id="C36863">
    <property type="entry name" value="C36863"/>
</dbReference>
<dbReference type="SMR" id="P42507"/>
<dbReference type="STRING" id="272942.RCAP_rcc00047"/>
<dbReference type="KEGG" id="rcp:RCAP_rcc00047"/>
<dbReference type="eggNOG" id="COG0583">
    <property type="taxonomic scope" value="Bacteria"/>
</dbReference>
<dbReference type="HOGENOM" id="CLU_039613_37_1_5"/>
<dbReference type="OrthoDB" id="7328368at2"/>
<dbReference type="Proteomes" id="UP000002361">
    <property type="component" value="Chromosome"/>
</dbReference>
<dbReference type="GO" id="GO:0003700">
    <property type="term" value="F:DNA-binding transcription factor activity"/>
    <property type="evidence" value="ECO:0007669"/>
    <property type="project" value="InterPro"/>
</dbReference>
<dbReference type="GO" id="GO:0043565">
    <property type="term" value="F:sequence-specific DNA binding"/>
    <property type="evidence" value="ECO:0007669"/>
    <property type="project" value="TreeGrafter"/>
</dbReference>
<dbReference type="GO" id="GO:0006351">
    <property type="term" value="P:DNA-templated transcription"/>
    <property type="evidence" value="ECO:0007669"/>
    <property type="project" value="TreeGrafter"/>
</dbReference>
<dbReference type="Gene3D" id="3.40.190.10">
    <property type="entry name" value="Periplasmic binding protein-like II"/>
    <property type="match status" value="2"/>
</dbReference>
<dbReference type="Gene3D" id="1.10.10.10">
    <property type="entry name" value="Winged helix-like DNA-binding domain superfamily/Winged helix DNA-binding domain"/>
    <property type="match status" value="1"/>
</dbReference>
<dbReference type="InterPro" id="IPR005119">
    <property type="entry name" value="LysR_subst-bd"/>
</dbReference>
<dbReference type="InterPro" id="IPR000847">
    <property type="entry name" value="Tscrpt_reg_HTH_LysR"/>
</dbReference>
<dbReference type="InterPro" id="IPR036388">
    <property type="entry name" value="WH-like_DNA-bd_sf"/>
</dbReference>
<dbReference type="InterPro" id="IPR036390">
    <property type="entry name" value="WH_DNA-bd_sf"/>
</dbReference>
<dbReference type="PANTHER" id="PTHR30537">
    <property type="entry name" value="HTH-TYPE TRANSCRIPTIONAL REGULATOR"/>
    <property type="match status" value="1"/>
</dbReference>
<dbReference type="PANTHER" id="PTHR30537:SF79">
    <property type="entry name" value="TRANSCRIPTIONAL REGULATOR-RELATED"/>
    <property type="match status" value="1"/>
</dbReference>
<dbReference type="Pfam" id="PF00126">
    <property type="entry name" value="HTH_1"/>
    <property type="match status" value="1"/>
</dbReference>
<dbReference type="Pfam" id="PF03466">
    <property type="entry name" value="LysR_substrate"/>
    <property type="match status" value="1"/>
</dbReference>
<dbReference type="SUPFAM" id="SSF53850">
    <property type="entry name" value="Periplasmic binding protein-like II"/>
    <property type="match status" value="1"/>
</dbReference>
<dbReference type="SUPFAM" id="SSF46785">
    <property type="entry name" value="Winged helix' DNA-binding domain"/>
    <property type="match status" value="1"/>
</dbReference>
<dbReference type="PROSITE" id="PS50931">
    <property type="entry name" value="HTH_LYSR"/>
    <property type="match status" value="1"/>
</dbReference>
<keyword id="KW-0010">Activator</keyword>
<keyword id="KW-0238">DNA-binding</keyword>
<keyword id="KW-1185">Reference proteome</keyword>
<keyword id="KW-0804">Transcription</keyword>
<keyword id="KW-0805">Transcription regulation</keyword>
<comment type="function">
    <text>Functions as a low-light activator of ahcY expression (gene for S-adenosyl-L-homocysteine hydrolase) and as a high-light activator of an uncharacterized 21.6 kDa protein in the ahcY-hvrB intergenic region (orf5). It is also a negative regulator of its own expression.</text>
</comment>
<comment type="similarity">
    <text evidence="2">Belongs to the LysR transcriptional regulatory family.</text>
</comment>
<proteinExistence type="inferred from homology"/>
<name>HVRB_RHOCB</name>
<sequence>MSEIDWRKMPPLTALRAFAATASEGGFSAAARKLNVTHAAIAQQVRALEADLDVPLVWRDGKHLHLTPEGERFAKALADGFSMIQSAADMLRADTSEKALTVTVPPVFASEWLMPRLARFWKKHPDIPLSLLPDARLVDLKEIGANIGIRFGVGKWPGVISVFLTAAPQVVVAAPELLGGRKKLSLREMAMLPWVREGDWPEQMQLLESMGLVPAALKFVDFPNEELALAAAREGIGLHLETEALIVEDLKLGWLVKIHELTEESLGYYIVRPPGRLNPAAKIFIDWLKAEA</sequence>
<evidence type="ECO:0000255" key="1">
    <source>
        <dbReference type="PROSITE-ProRule" id="PRU00253"/>
    </source>
</evidence>
<evidence type="ECO:0000305" key="2"/>